<feature type="signal peptide" evidence="2">
    <location>
        <begin position="1"/>
        <end position="24"/>
    </location>
</feature>
<feature type="chain" id="PRO_0000403876" description="Anionic peptide 17.1">
    <location>
        <begin position="25"/>
        <end position="77"/>
    </location>
</feature>
<accession>P0CI96</accession>
<keyword id="KW-0964">Secreted</keyword>
<keyword id="KW-0732">Signal</keyword>
<dbReference type="EMBL" id="GT028723">
    <property type="status" value="NOT_ANNOTATED_CDS"/>
    <property type="molecule type" value="mRNA"/>
</dbReference>
<dbReference type="GO" id="GO:0005576">
    <property type="term" value="C:extracellular region"/>
    <property type="evidence" value="ECO:0007669"/>
    <property type="project" value="UniProtKB-SubCell"/>
</dbReference>
<protein>
    <recommendedName>
        <fullName>Anionic peptide 17.1</fullName>
    </recommendedName>
</protein>
<proteinExistence type="inferred from homology"/>
<sequence>MASKTVLVLLLVSVLVSTFCTAKAYPASLEDNFDLDALDDLDDLDLEDFYDLEPADLVLLDMWASMLENSDFEDDFE</sequence>
<reference key="1">
    <citation type="journal article" date="2010" name="BMC Genomics">
        <title>Comparative venom gland transcriptome analysis of the scorpion Lychas mucronatus reveals intraspecific toxic gene diversity and new venomous components.</title>
        <authorList>
            <person name="Zhao R."/>
            <person name="Ma Y."/>
            <person name="He Y."/>
            <person name="Di Z."/>
            <person name="Wu Y.-L."/>
            <person name="Cao Z.-J."/>
            <person name="Li W.-X."/>
        </authorList>
    </citation>
    <scope>NUCLEOTIDE SEQUENCE [MRNA]</scope>
    <source>
        <strain>Yunnan</strain>
        <tissue>Venom gland</tissue>
    </source>
</reference>
<name>NDBQ_LYCMC</name>
<organism>
    <name type="scientific">Lychas mucronatus</name>
    <name type="common">Chinese swimming scorpion</name>
    <dbReference type="NCBI Taxonomy" id="172552"/>
    <lineage>
        <taxon>Eukaryota</taxon>
        <taxon>Metazoa</taxon>
        <taxon>Ecdysozoa</taxon>
        <taxon>Arthropoda</taxon>
        <taxon>Chelicerata</taxon>
        <taxon>Arachnida</taxon>
        <taxon>Scorpiones</taxon>
        <taxon>Buthida</taxon>
        <taxon>Buthoidea</taxon>
        <taxon>Buthidae</taxon>
        <taxon>Lychas</taxon>
    </lineage>
</organism>
<evidence type="ECO:0000250" key="1"/>
<evidence type="ECO:0000255" key="2"/>
<evidence type="ECO:0000305" key="3"/>
<comment type="subcellular location">
    <subcellularLocation>
        <location evidence="1">Secreted</location>
    </subcellularLocation>
</comment>
<comment type="tissue specificity">
    <text evidence="3">Expressed by the venom gland.</text>
</comment>
<comment type="similarity">
    <text evidence="3">Belongs to the non-disulfide-bridged peptide (NDBP) superfamily. Long chain multifunctional peptide (group 2) family.</text>
</comment>